<accession>A7Z2R4</accession>
<dbReference type="EMBL" id="CP000560">
    <property type="protein sequence ID" value="ABS73290.1"/>
    <property type="molecule type" value="Genomic_DNA"/>
</dbReference>
<dbReference type="GeneID" id="93080061"/>
<dbReference type="KEGG" id="bay:RBAM_009260"/>
<dbReference type="HOGENOM" id="CLU_049702_2_0_9"/>
<dbReference type="Proteomes" id="UP000001120">
    <property type="component" value="Chromosome"/>
</dbReference>
<dbReference type="HAMAP" id="MF_01232">
    <property type="entry name" value="UPF0229"/>
    <property type="match status" value="1"/>
</dbReference>
<dbReference type="InterPro" id="IPR014230">
    <property type="entry name" value="Spore_YhbH"/>
</dbReference>
<dbReference type="InterPro" id="IPR006698">
    <property type="entry name" value="UPF0229"/>
</dbReference>
<dbReference type="NCBIfam" id="TIGR02877">
    <property type="entry name" value="spore_yhbH"/>
    <property type="match status" value="1"/>
</dbReference>
<dbReference type="PANTHER" id="PTHR30510">
    <property type="entry name" value="UPF0229 PROTEIN YEAH"/>
    <property type="match status" value="1"/>
</dbReference>
<dbReference type="PANTHER" id="PTHR30510:SF2">
    <property type="entry name" value="UPF0229 PROTEIN YEAH"/>
    <property type="match status" value="1"/>
</dbReference>
<dbReference type="Pfam" id="PF04285">
    <property type="entry name" value="DUF444"/>
    <property type="match status" value="2"/>
</dbReference>
<reference key="1">
    <citation type="journal article" date="2007" name="Nat. Biotechnol.">
        <title>Comparative analysis of the complete genome sequence of the plant growth-promoting bacterium Bacillus amyloliquefaciens FZB42.</title>
        <authorList>
            <person name="Chen X.H."/>
            <person name="Koumoutsi A."/>
            <person name="Scholz R."/>
            <person name="Eisenreich A."/>
            <person name="Schneider K."/>
            <person name="Heinemeyer I."/>
            <person name="Morgenstern B."/>
            <person name="Voss B."/>
            <person name="Hess W.R."/>
            <person name="Reva O."/>
            <person name="Junge H."/>
            <person name="Voigt B."/>
            <person name="Jungblut P.R."/>
            <person name="Vater J."/>
            <person name="Suessmuth R."/>
            <person name="Liesegang H."/>
            <person name="Strittmatter A."/>
            <person name="Gottschalk G."/>
            <person name="Borriss R."/>
        </authorList>
    </citation>
    <scope>NUCLEOTIDE SEQUENCE [LARGE SCALE GENOMIC DNA]</scope>
    <source>
        <strain>DSM 23117 / BGSC 10A6 / LMG 26770 / FZB42</strain>
    </source>
</reference>
<gene>
    <name type="ordered locus">RBAM_009260</name>
</gene>
<organism>
    <name type="scientific">Bacillus velezensis (strain DSM 23117 / BGSC 10A6 / LMG 26770 / FZB42)</name>
    <name type="common">Bacillus amyloliquefaciens subsp. plantarum</name>
    <dbReference type="NCBI Taxonomy" id="326423"/>
    <lineage>
        <taxon>Bacteria</taxon>
        <taxon>Bacillati</taxon>
        <taxon>Bacillota</taxon>
        <taxon>Bacilli</taxon>
        <taxon>Bacillales</taxon>
        <taxon>Bacillaceae</taxon>
        <taxon>Bacillus</taxon>
        <taxon>Bacillus amyloliquefaciens group</taxon>
    </lineage>
</organism>
<proteinExistence type="inferred from homology"/>
<protein>
    <recommendedName>
        <fullName evidence="1">UPF0229 protein RBAM_009260</fullName>
    </recommendedName>
</protein>
<comment type="similarity">
    <text evidence="1">Belongs to the UPF0229 family.</text>
</comment>
<feature type="chain" id="PRO_1000066845" description="UPF0229 protein RBAM_009260">
    <location>
        <begin position="1"/>
        <end position="394"/>
    </location>
</feature>
<name>Y926_BACVZ</name>
<evidence type="ECO:0000255" key="1">
    <source>
        <dbReference type="HAMAP-Rule" id="MF_01232"/>
    </source>
</evidence>
<sequence>MSRNDSGNFLISEEDWSLHRKGFDDQQRHQKKVQEAIKNNLPDLVTEESIIMSNGKDVVKIPIRSLDEYKIRYNYDKNKHVGQGDGDSEVGDVVARDGADKKQGAGKGQGAGDQAGEDYYEAEVSLMDLEEALFQELELPNLQQKERDNIVHTDIEFNDIRKTGLTGNIDKKRTMLSAYKRNAMTGKPSFYPIYPEDLKYKTWNDVTKPESKAVVLAMMDTSGSMGVWEKYMARSFFFWMTRFLRTKYETVDIEFIAHHTEAKVVSEEDFFSKGESGGTICSSVYRKSLELIDEKYDPARYNIYPFHFSDGDNLTSDNARCVKLVNDIMKKSNLFCYGEVNQYNRHSTLMSAYKNVKDDKFKYYILKQKSDVFQALKSFFKNEESGVSKASYEI</sequence>